<name>PLPB_MANHA</name>
<protein>
    <recommendedName>
        <fullName>Outer membrane lipoprotein 2</fullName>
    </recommendedName>
    <alternativeName>
        <fullName>PLP2</fullName>
    </alternativeName>
</protein>
<feature type="signal peptide" evidence="1">
    <location>
        <begin position="1"/>
        <end position="19"/>
    </location>
</feature>
<feature type="chain" id="PRO_0000019748" description="Outer membrane lipoprotein 2">
    <location>
        <begin position="20"/>
        <end position="276"/>
    </location>
</feature>
<feature type="lipid moiety-binding region" description="N-palmitoyl cysteine" evidence="2">
    <location>
        <position position="20"/>
    </location>
</feature>
<feature type="lipid moiety-binding region" description="S-diacylglycerol cysteine" evidence="2">
    <location>
        <position position="20"/>
    </location>
</feature>
<feature type="sequence conflict" description="In Ref. 2; AAA25547." evidence="2" ref="2">
    <original>FNG</original>
    <variation>LTVH</variation>
    <location>
        <begin position="268"/>
        <end position="270"/>
    </location>
</feature>
<keyword id="KW-0998">Cell outer membrane</keyword>
<keyword id="KW-0449">Lipoprotein</keyword>
<keyword id="KW-0472">Membrane</keyword>
<keyword id="KW-0564">Palmitate</keyword>
<keyword id="KW-0732">Signal</keyword>
<dbReference type="EMBL" id="L11037">
    <property type="protein sequence ID" value="AAA25539.1"/>
    <property type="molecule type" value="Genomic_DNA"/>
</dbReference>
<dbReference type="EMBL" id="L16627">
    <property type="protein sequence ID" value="AAA25547.1"/>
    <property type="molecule type" value="Genomic_DNA"/>
</dbReference>
<dbReference type="PIR" id="JN0752">
    <property type="entry name" value="JN0752"/>
</dbReference>
<dbReference type="RefSeq" id="WP_006249128.1">
    <property type="nucleotide sequence ID" value="NZ_VAJK01000005.1"/>
</dbReference>
<dbReference type="SMR" id="Q08869"/>
<dbReference type="STRING" id="75985.WC39_10135"/>
<dbReference type="OrthoDB" id="9812878at2"/>
<dbReference type="GO" id="GO:0009279">
    <property type="term" value="C:cell outer membrane"/>
    <property type="evidence" value="ECO:0007669"/>
    <property type="project" value="UniProtKB-SubCell"/>
</dbReference>
<dbReference type="CDD" id="cd13598">
    <property type="entry name" value="PBP2_lipoprotein_IlpA_like"/>
    <property type="match status" value="1"/>
</dbReference>
<dbReference type="Gene3D" id="3.40.190.10">
    <property type="entry name" value="Periplasmic binding protein-like II"/>
    <property type="match status" value="2"/>
</dbReference>
<dbReference type="InterPro" id="IPR004872">
    <property type="entry name" value="Lipoprotein_NlpA"/>
</dbReference>
<dbReference type="NCBIfam" id="TIGR00363">
    <property type="entry name" value="MetQ/NlpA family lipoprotein"/>
    <property type="match status" value="1"/>
</dbReference>
<dbReference type="PANTHER" id="PTHR30429">
    <property type="entry name" value="D-METHIONINE-BINDING LIPOPROTEIN METQ"/>
    <property type="match status" value="1"/>
</dbReference>
<dbReference type="PANTHER" id="PTHR30429:SF1">
    <property type="entry name" value="D-METHIONINE-BINDING LIPOPROTEIN METQ-RELATED"/>
    <property type="match status" value="1"/>
</dbReference>
<dbReference type="Pfam" id="PF03180">
    <property type="entry name" value="Lipoprotein_9"/>
    <property type="match status" value="1"/>
</dbReference>
<dbReference type="PIRSF" id="PIRSF002854">
    <property type="entry name" value="MetQ"/>
    <property type="match status" value="1"/>
</dbReference>
<dbReference type="SUPFAM" id="SSF53850">
    <property type="entry name" value="Periplasmic binding protein-like II"/>
    <property type="match status" value="1"/>
</dbReference>
<dbReference type="PROSITE" id="PS51257">
    <property type="entry name" value="PROKAR_LIPOPROTEIN"/>
    <property type="match status" value="1"/>
</dbReference>
<proteinExistence type="inferred from homology"/>
<reference key="1">
    <citation type="journal article" date="1993" name="Gene">
        <title>Analysis of tandem, multiple genes encoding 30-kDa membrane proteins in Pasteurella haemolytica A1.</title>
        <authorList>
            <person name="Murphy G.L."/>
            <person name="Whitworth L.C."/>
        </authorList>
    </citation>
    <scope>NUCLEOTIDE SEQUENCE [GENOMIC DNA]</scope>
    <source>
        <strain>Serotype A1</strain>
    </source>
</reference>
<reference key="2">
    <citation type="journal article" date="1993" name="Infect. Immun.">
        <title>Three contiguous lipoprotein genes in Pasteurella haemolytica A1 which are homologous to a lipoprotein gene in Haemophilus influenzae type b.</title>
        <authorList>
            <person name="Cooney B.J."/>
            <person name="Lo R.Y.C."/>
        </authorList>
    </citation>
    <scope>NUCLEOTIDE SEQUENCE [GENOMIC DNA]</scope>
    <source>
        <strain>Serotype A1</strain>
    </source>
</reference>
<gene>
    <name type="primary">plpB</name>
</gene>
<comment type="subcellular location">
    <subcellularLocation>
        <location evidence="2">Cell outer membrane</location>
        <topology evidence="2">Lipid-anchor</topology>
    </subcellularLocation>
</comment>
<comment type="similarity">
    <text evidence="2">Belongs to the NlpA lipoprotein family.</text>
</comment>
<accession>Q08869</accession>
<accession>Q07364</accession>
<organism>
    <name type="scientific">Mannheimia haemolytica</name>
    <name type="common">Pasteurella haemolytica</name>
    <dbReference type="NCBI Taxonomy" id="75985"/>
    <lineage>
        <taxon>Bacteria</taxon>
        <taxon>Pseudomonadati</taxon>
        <taxon>Pseudomonadota</taxon>
        <taxon>Gammaproteobacteria</taxon>
        <taxon>Pasteurellales</taxon>
        <taxon>Pasteurellaceae</taxon>
        <taxon>Mannheimia</taxon>
    </lineage>
</organism>
<sequence>MNFKKLLGVALVSALALTACKDEKAQAPATTAKTENKAPLKVGVMTGPEAQMTEVAVKIAKEKYGLDVELVQFTEYTQPNAALHSKDLDANAFQTVPYLEQEVKDRGYKLAIIGNTLVWPIAAYSKKIKNISELKDGATVAIPNNASNTARALLLLQAHGLLKLKDPKNVFATENDIIENPKNIKIVQADTSLLTRMLDDVELAVINNTYAGQAGLSPDKDGIIVESKDSPYVNLVVSREDNKDDPRLQTFVKSFQTEEVFQEALKLFNGGVVKGW</sequence>
<evidence type="ECO:0000255" key="1">
    <source>
        <dbReference type="PROSITE-ProRule" id="PRU00303"/>
    </source>
</evidence>
<evidence type="ECO:0000305" key="2"/>